<name>YPB2_CAEEL</name>
<keyword id="KW-1185">Reference proteome</keyword>
<reference key="1">
    <citation type="journal article" date="1998" name="Science">
        <title>Genome sequence of the nematode C. elegans: a platform for investigating biology.</title>
        <authorList>
            <consortium name="The C. elegans sequencing consortium"/>
        </authorList>
    </citation>
    <scope>NUCLEOTIDE SEQUENCE [LARGE SCALE GENOMIC DNA]</scope>
    <source>
        <strain>Bristol N2</strain>
    </source>
</reference>
<proteinExistence type="predicted"/>
<feature type="chain" id="PRO_0000065126" description="Uncharacterized protein C03B8.2">
    <location>
        <begin position="1"/>
        <end position="59"/>
    </location>
</feature>
<organism>
    <name type="scientific">Caenorhabditis elegans</name>
    <dbReference type="NCBI Taxonomy" id="6239"/>
    <lineage>
        <taxon>Eukaryota</taxon>
        <taxon>Metazoa</taxon>
        <taxon>Ecdysozoa</taxon>
        <taxon>Nematoda</taxon>
        <taxon>Chromadorea</taxon>
        <taxon>Rhabditida</taxon>
        <taxon>Rhabditina</taxon>
        <taxon>Rhabditomorpha</taxon>
        <taxon>Rhabditoidea</taxon>
        <taxon>Rhabditidae</taxon>
        <taxon>Peloderinae</taxon>
        <taxon>Caenorhabditis</taxon>
    </lineage>
</organism>
<sequence length="59" mass="7189">MRNAVKLLELSLIDDHFLRYRPSDAAQNHRINNSTKFIFSFFMFNKQNFWQLFSFCINI</sequence>
<protein>
    <recommendedName>
        <fullName>Uncharacterized protein C03B8.2</fullName>
    </recommendedName>
</protein>
<dbReference type="EMBL" id="FO080307">
    <property type="protein sequence ID" value="CCD62759.1"/>
    <property type="molecule type" value="Genomic_DNA"/>
</dbReference>
<dbReference type="PIR" id="T15392">
    <property type="entry name" value="T15392"/>
</dbReference>
<dbReference type="RefSeq" id="NP_498680.1">
    <property type="nucleotide sequence ID" value="NM_066279.1"/>
</dbReference>
<dbReference type="STRING" id="6239.C03B8.2.1"/>
<dbReference type="PaxDb" id="6239-C03B8.2"/>
<dbReference type="UCSC" id="C03B8.2">
    <property type="organism name" value="c. elegans"/>
</dbReference>
<dbReference type="WormBase" id="C03B8.2">
    <property type="protein sequence ID" value="CE00764"/>
    <property type="gene ID" value="WBGene00015385"/>
</dbReference>
<dbReference type="eggNOG" id="KOG0654">
    <property type="taxonomic scope" value="Eukaryota"/>
</dbReference>
<dbReference type="HOGENOM" id="CLU_2962984_0_0_1"/>
<dbReference type="InParanoid" id="Q11105"/>
<dbReference type="PhylomeDB" id="Q11105"/>
<dbReference type="PRO" id="PR:Q11105"/>
<dbReference type="Proteomes" id="UP000001940">
    <property type="component" value="Chromosome III"/>
</dbReference>
<dbReference type="Bgee" id="WBGene00015385">
    <property type="expression patterns" value="Expressed in germ line (C elegans) and 3 other cell types or tissues"/>
</dbReference>
<gene>
    <name type="ORF">C03B8.2</name>
</gene>
<accession>Q11105</accession>